<keyword id="KW-1003">Cell membrane</keyword>
<keyword id="KW-1015">Disulfide bond</keyword>
<keyword id="KW-0297">G-protein coupled receptor</keyword>
<keyword id="KW-0325">Glycoprotein</keyword>
<keyword id="KW-0449">Lipoprotein</keyword>
<keyword id="KW-0472">Membrane</keyword>
<keyword id="KW-0564">Palmitate</keyword>
<keyword id="KW-0597">Phosphoprotein</keyword>
<keyword id="KW-0675">Receptor</keyword>
<keyword id="KW-1185">Reference proteome</keyword>
<keyword id="KW-0765">Sulfation</keyword>
<keyword id="KW-0807">Transducer</keyword>
<keyword id="KW-0812">Transmembrane</keyword>
<keyword id="KW-1133">Transmembrane helix</keyword>
<gene>
    <name type="primary">CCR5</name>
    <name type="synonym">CMKBR5</name>
</gene>
<sequence>MDYQVSSPTYDIDYYTSEPCQKINVKQIAGRLLPPLYSLVFIFGFVGNILVVLILINCKRLKSMTDIYLLNLAISDLLFLLTVPFWAHYAAAQWDFGNTMCQLLTGLYFIGFFSGIFFIILLTIDRYLAIVHAVFALKARTVTFGVVTSVITWVVAVFASLPGIIFTRSQREGLHYTCSSHFPYSQYQFWKNFQTLKIVILGLVLPLLVMVICYSGILKTLLRCRNEKKRHRAVRLIFTIMIVYFLFWAPYNIVLLLNTFQEFFGLNNCSSSNRLDQAMQVTETLGMTHCCINPIIYAFVGEKFRNYLLVFFQKHIAKRFCKCCSIFQQEAPERASSVYTRSTGEQEISVGL</sequence>
<protein>
    <recommendedName>
        <fullName>C-C chemokine receptor type 5</fullName>
        <shortName>C-C CKR-5</shortName>
        <shortName>CC-CKR-5</shortName>
        <shortName>CCR-5</shortName>
        <shortName>CCR5</shortName>
    </recommendedName>
    <cdAntigenName>CD195</cdAntigenName>
</protein>
<organism>
    <name type="scientific">Theropithecus gelada</name>
    <name type="common">Gelada baboon</name>
    <dbReference type="NCBI Taxonomy" id="9565"/>
    <lineage>
        <taxon>Eukaryota</taxon>
        <taxon>Metazoa</taxon>
        <taxon>Chordata</taxon>
        <taxon>Craniata</taxon>
        <taxon>Vertebrata</taxon>
        <taxon>Euteleostomi</taxon>
        <taxon>Mammalia</taxon>
        <taxon>Eutheria</taxon>
        <taxon>Euarchontoglires</taxon>
        <taxon>Primates</taxon>
        <taxon>Haplorrhini</taxon>
        <taxon>Catarrhini</taxon>
        <taxon>Cercopithecidae</taxon>
        <taxon>Cercopithecinae</taxon>
        <taxon>Theropithecus</taxon>
    </lineage>
</organism>
<dbReference type="EMBL" id="AF177891">
    <property type="protein sequence ID" value="AAK43374.1"/>
    <property type="molecule type" value="Genomic_DNA"/>
</dbReference>
<dbReference type="SMR" id="Q95NC1"/>
<dbReference type="GlyCosmos" id="Q95NC1">
    <property type="glycosylation" value="2 sites, No reported glycans"/>
</dbReference>
<dbReference type="Ensembl" id="ENSTGET00000017298.1">
    <property type="protein sequence ID" value="ENSTGEP00000014437.1"/>
    <property type="gene ID" value="ENSTGEG00000011733.1"/>
</dbReference>
<dbReference type="Proteomes" id="UP000694411">
    <property type="component" value="Chromosome 2"/>
</dbReference>
<dbReference type="GO" id="GO:0005737">
    <property type="term" value="C:cytoplasm"/>
    <property type="evidence" value="ECO:0007669"/>
    <property type="project" value="TreeGrafter"/>
</dbReference>
<dbReference type="GO" id="GO:0009897">
    <property type="term" value="C:external side of plasma membrane"/>
    <property type="evidence" value="ECO:0000250"/>
    <property type="project" value="UniProtKB"/>
</dbReference>
<dbReference type="GO" id="GO:0016493">
    <property type="term" value="F:C-C chemokine receptor activity"/>
    <property type="evidence" value="ECO:0000250"/>
    <property type="project" value="UniProtKB"/>
</dbReference>
<dbReference type="GO" id="GO:0071791">
    <property type="term" value="F:chemokine (C-C motif) ligand 5 binding"/>
    <property type="evidence" value="ECO:0007669"/>
    <property type="project" value="TreeGrafter"/>
</dbReference>
<dbReference type="GO" id="GO:0019722">
    <property type="term" value="P:calcium-mediated signaling"/>
    <property type="evidence" value="ECO:0007669"/>
    <property type="project" value="TreeGrafter"/>
</dbReference>
<dbReference type="GO" id="GO:0060326">
    <property type="term" value="P:cell chemotaxis"/>
    <property type="evidence" value="ECO:0007669"/>
    <property type="project" value="TreeGrafter"/>
</dbReference>
<dbReference type="GO" id="GO:0006955">
    <property type="term" value="P:immune response"/>
    <property type="evidence" value="ECO:0007669"/>
    <property type="project" value="InterPro"/>
</dbReference>
<dbReference type="GO" id="GO:0006954">
    <property type="term" value="P:inflammatory response"/>
    <property type="evidence" value="ECO:0007669"/>
    <property type="project" value="InterPro"/>
</dbReference>
<dbReference type="GO" id="GO:0007204">
    <property type="term" value="P:positive regulation of cytosolic calcium ion concentration"/>
    <property type="evidence" value="ECO:0007669"/>
    <property type="project" value="TreeGrafter"/>
</dbReference>
<dbReference type="CDD" id="cd15184">
    <property type="entry name" value="7tmA_CCR5_CCR2"/>
    <property type="match status" value="1"/>
</dbReference>
<dbReference type="FunFam" id="1.20.1070.10:FF:000026">
    <property type="entry name" value="C-C chemokine receptor type 5"/>
    <property type="match status" value="1"/>
</dbReference>
<dbReference type="Gene3D" id="1.20.1070.10">
    <property type="entry name" value="Rhodopsin 7-helix transmembrane proteins"/>
    <property type="match status" value="1"/>
</dbReference>
<dbReference type="InterPro" id="IPR050119">
    <property type="entry name" value="CCR1-9-like"/>
</dbReference>
<dbReference type="InterPro" id="IPR002240">
    <property type="entry name" value="Chemokine_CCR5"/>
</dbReference>
<dbReference type="InterPro" id="IPR000355">
    <property type="entry name" value="Chemokine_rcpt"/>
</dbReference>
<dbReference type="InterPro" id="IPR000276">
    <property type="entry name" value="GPCR_Rhodpsn"/>
</dbReference>
<dbReference type="InterPro" id="IPR017452">
    <property type="entry name" value="GPCR_Rhodpsn_7TM"/>
</dbReference>
<dbReference type="PANTHER" id="PTHR10489:SF686">
    <property type="entry name" value="C-C CHEMOKINE RECEPTOR TYPE 5"/>
    <property type="match status" value="1"/>
</dbReference>
<dbReference type="PANTHER" id="PTHR10489">
    <property type="entry name" value="CELL ADHESION MOLECULE"/>
    <property type="match status" value="1"/>
</dbReference>
<dbReference type="Pfam" id="PF00001">
    <property type="entry name" value="7tm_1"/>
    <property type="match status" value="1"/>
</dbReference>
<dbReference type="PRINTS" id="PR00657">
    <property type="entry name" value="CCCHEMOKINER"/>
</dbReference>
<dbReference type="PRINTS" id="PR01110">
    <property type="entry name" value="CHEMOKINER5"/>
</dbReference>
<dbReference type="PRINTS" id="PR00237">
    <property type="entry name" value="GPCRRHODOPSN"/>
</dbReference>
<dbReference type="SUPFAM" id="SSF81321">
    <property type="entry name" value="Family A G protein-coupled receptor-like"/>
    <property type="match status" value="1"/>
</dbReference>
<dbReference type="PROSITE" id="PS00237">
    <property type="entry name" value="G_PROTEIN_RECEP_F1_1"/>
    <property type="match status" value="1"/>
</dbReference>
<dbReference type="PROSITE" id="PS50262">
    <property type="entry name" value="G_PROTEIN_RECEP_F1_2"/>
    <property type="match status" value="1"/>
</dbReference>
<name>CCR5_THEGE</name>
<reference key="1">
    <citation type="journal article" date="1999" name="Mol. Biol. Evol.">
        <title>Sequence evolution of the CCR5 chemokine receptor gene in primates.</title>
        <authorList>
            <person name="Zhang Y.-W."/>
            <person name="Ryder O.A."/>
            <person name="Zhang Y.-P."/>
        </authorList>
    </citation>
    <scope>NUCLEOTIDE SEQUENCE [GENOMIC DNA]</scope>
</reference>
<evidence type="ECO:0000250" key="1">
    <source>
        <dbReference type="UniProtKB" id="P51681"/>
    </source>
</evidence>
<evidence type="ECO:0000250" key="2">
    <source>
        <dbReference type="UniProtKB" id="Q9XT76"/>
    </source>
</evidence>
<evidence type="ECO:0000255" key="3"/>
<evidence type="ECO:0000255" key="4">
    <source>
        <dbReference type="PROSITE-ProRule" id="PRU00521"/>
    </source>
</evidence>
<feature type="chain" id="PRO_0000069282" description="C-C chemokine receptor type 5">
    <location>
        <begin position="1"/>
        <end position="352"/>
    </location>
</feature>
<feature type="topological domain" description="Extracellular" evidence="3">
    <location>
        <begin position="1"/>
        <end position="30"/>
    </location>
</feature>
<feature type="transmembrane region" description="Helical; Name=1" evidence="3">
    <location>
        <begin position="31"/>
        <end position="58"/>
    </location>
</feature>
<feature type="topological domain" description="Cytoplasmic" evidence="3">
    <location>
        <begin position="59"/>
        <end position="68"/>
    </location>
</feature>
<feature type="transmembrane region" description="Helical; Name=2" evidence="3">
    <location>
        <begin position="69"/>
        <end position="89"/>
    </location>
</feature>
<feature type="topological domain" description="Extracellular" evidence="3">
    <location>
        <begin position="90"/>
        <end position="102"/>
    </location>
</feature>
<feature type="transmembrane region" description="Helical; Name=3" evidence="3">
    <location>
        <begin position="103"/>
        <end position="124"/>
    </location>
</feature>
<feature type="topological domain" description="Cytoplasmic" evidence="3">
    <location>
        <begin position="125"/>
        <end position="141"/>
    </location>
</feature>
<feature type="transmembrane region" description="Helical; Name=4" evidence="3">
    <location>
        <begin position="142"/>
        <end position="166"/>
    </location>
</feature>
<feature type="topological domain" description="Extracellular" evidence="3">
    <location>
        <begin position="167"/>
        <end position="198"/>
    </location>
</feature>
<feature type="transmembrane region" description="Helical; Name=5" evidence="3">
    <location>
        <begin position="199"/>
        <end position="218"/>
    </location>
</feature>
<feature type="topological domain" description="Cytoplasmic" evidence="3">
    <location>
        <begin position="219"/>
        <end position="235"/>
    </location>
</feature>
<feature type="transmembrane region" description="Helical; Name=6" evidence="3">
    <location>
        <begin position="236"/>
        <end position="260"/>
    </location>
</feature>
<feature type="topological domain" description="Extracellular" evidence="3">
    <location>
        <begin position="261"/>
        <end position="277"/>
    </location>
</feature>
<feature type="transmembrane region" description="Helical; Name=7" evidence="3">
    <location>
        <begin position="278"/>
        <end position="301"/>
    </location>
</feature>
<feature type="topological domain" description="Cytoplasmic" evidence="3">
    <location>
        <begin position="302"/>
        <end position="352"/>
    </location>
</feature>
<feature type="modified residue" description="Sulfotyrosine" evidence="1">
    <location>
        <position position="3"/>
    </location>
</feature>
<feature type="modified residue" description="Sulfotyrosine" evidence="3">
    <location>
        <position position="10"/>
    </location>
</feature>
<feature type="modified residue" description="Sulfotyrosine" evidence="3">
    <location>
        <position position="14"/>
    </location>
</feature>
<feature type="modified residue" description="Sulfotyrosine" evidence="3">
    <location>
        <position position="15"/>
    </location>
</feature>
<feature type="modified residue" description="Phosphoserine; by BARK1" evidence="1">
    <location>
        <position position="336"/>
    </location>
</feature>
<feature type="modified residue" description="Phosphoserine; by BARK1" evidence="1">
    <location>
        <position position="337"/>
    </location>
</feature>
<feature type="modified residue" description="Phosphoserine; by BARK1" evidence="1">
    <location>
        <position position="342"/>
    </location>
</feature>
<feature type="modified residue" description="Phosphoserine; by BARK1" evidence="1">
    <location>
        <position position="349"/>
    </location>
</feature>
<feature type="lipid moiety-binding region" description="S-palmitoyl cysteine" evidence="1">
    <location>
        <position position="321"/>
    </location>
</feature>
<feature type="lipid moiety-binding region" description="S-palmitoyl cysteine" evidence="1">
    <location>
        <position position="323"/>
    </location>
</feature>
<feature type="lipid moiety-binding region" description="S-palmitoyl cysteine" evidence="1">
    <location>
        <position position="324"/>
    </location>
</feature>
<feature type="glycosylation site" description="O-linked (GalNAc...) serine" evidence="1">
    <location>
        <position position="6"/>
    </location>
</feature>
<feature type="glycosylation site" description="O-linked (GalNAc...) serine" evidence="1">
    <location>
        <position position="7"/>
    </location>
</feature>
<feature type="disulfide bond" evidence="1">
    <location>
        <begin position="20"/>
        <end position="269"/>
    </location>
</feature>
<feature type="disulfide bond" evidence="4">
    <location>
        <begin position="101"/>
        <end position="178"/>
    </location>
</feature>
<accession>Q95NC1</accession>
<comment type="function">
    <text evidence="1">Receptor for a number of inflammatory CC-chemokines including CCL3/MIP-1-alpha, CCL4/MIP-1-beta and RANTES and subsequently transduces a signal by increasing the intracellular calcium ion level. May play a role in the control of granulocytic lineage proliferation or differentiation. Participates in T-lymphocyte migration to the infection site by acting as a chemotactic receptor.</text>
</comment>
<comment type="subunit">
    <text evidence="1">Interacts with PRAF2. Efficient ligand binding to CCL3/MIP-1alpha and CCL4/MIP-1beta requires sulfation, O-glycosylation and sialic acid modifications. Glycosylation on Ser-6 is required for efficient binding of CCL4. Interacts with GRK2. Interacts with ARRB1 and ARRB2. Interacts with CNIH4. Interacts with S100A4; this interaction stimulates T-lymphocyte chemotaxis.</text>
</comment>
<comment type="subcellular location">
    <subcellularLocation>
        <location evidence="2">Cell membrane</location>
        <topology evidence="2">Multi-pass membrane protein</topology>
    </subcellularLocation>
</comment>
<comment type="PTM">
    <text evidence="1">Sulfated on at least 2 of the N-terminal tyrosines. Sulfation is required for efficient binding of the chemokines, CCL3 and CCL4 (By similarity).</text>
</comment>
<comment type="PTM">
    <text evidence="1">Palmitoylation in the C-terminal is important for cell surface expression.</text>
</comment>
<comment type="PTM">
    <text evidence="1">Phosphorylation on serine residues in the C-terminal is stimulated by binding CC chemokines especially by APO-RANTES.</text>
</comment>
<comment type="PTM">
    <text evidence="1">O-glycosylated, but not N-glycosylated. Ser-6 appears to be the major site even if Ser-7 may be also O-glycosylated. Also sialylated glycans present which contribute to chemokine binding. Thr-16 and Ser-17 may also be glycosylated and, if so, with small moieties such as a T-antigen.</text>
</comment>
<comment type="similarity">
    <text evidence="4">Belongs to the G-protein coupled receptor 1 family.</text>
</comment>
<proteinExistence type="inferred from homology"/>